<accession>B2JZK6</accession>
<proteinExistence type="inferred from homology"/>
<name>DCD_YERPB</name>
<organism>
    <name type="scientific">Yersinia pseudotuberculosis serotype IB (strain PB1/+)</name>
    <dbReference type="NCBI Taxonomy" id="502801"/>
    <lineage>
        <taxon>Bacteria</taxon>
        <taxon>Pseudomonadati</taxon>
        <taxon>Pseudomonadota</taxon>
        <taxon>Gammaproteobacteria</taxon>
        <taxon>Enterobacterales</taxon>
        <taxon>Yersiniaceae</taxon>
        <taxon>Yersinia</taxon>
    </lineage>
</organism>
<feature type="chain" id="PRO_1000096464" description="dCTP deaminase">
    <location>
        <begin position="1"/>
        <end position="193"/>
    </location>
</feature>
<feature type="region of interest" description="Disordered" evidence="2">
    <location>
        <begin position="169"/>
        <end position="193"/>
    </location>
</feature>
<feature type="active site" description="Proton donor/acceptor" evidence="1">
    <location>
        <position position="138"/>
    </location>
</feature>
<feature type="binding site" evidence="1">
    <location>
        <begin position="110"/>
        <end position="115"/>
    </location>
    <ligand>
        <name>dCTP</name>
        <dbReference type="ChEBI" id="CHEBI:61481"/>
    </ligand>
</feature>
<feature type="binding site" evidence="1">
    <location>
        <position position="128"/>
    </location>
    <ligand>
        <name>dCTP</name>
        <dbReference type="ChEBI" id="CHEBI:61481"/>
    </ligand>
</feature>
<feature type="binding site" evidence="1">
    <location>
        <begin position="136"/>
        <end position="138"/>
    </location>
    <ligand>
        <name>dCTP</name>
        <dbReference type="ChEBI" id="CHEBI:61481"/>
    </ligand>
</feature>
<feature type="binding site" evidence="1">
    <location>
        <position position="171"/>
    </location>
    <ligand>
        <name>dCTP</name>
        <dbReference type="ChEBI" id="CHEBI:61481"/>
    </ligand>
</feature>
<feature type="binding site" evidence="1">
    <location>
        <position position="178"/>
    </location>
    <ligand>
        <name>dCTP</name>
        <dbReference type="ChEBI" id="CHEBI:61481"/>
    </ligand>
</feature>
<feature type="binding site" evidence="1">
    <location>
        <position position="182"/>
    </location>
    <ligand>
        <name>dCTP</name>
        <dbReference type="ChEBI" id="CHEBI:61481"/>
    </ligand>
</feature>
<sequence>MRLCDRDIEAWLDSGKLGIEPRPPVERINGATVDVRLGNQFRVFRGHTAAFIDLSGPKDEVSAALERVMSDEINLPEGEAFFLHPGELALAVTLESVTIPDDLVGWLDGRSSLARLGLMVHVTAHRIDPGWQGRIVLEFYNSGKLPLALRPGMLIGALSFEPLSGPAARPYNSRQDAKYRGQQGAVASRIDKD</sequence>
<protein>
    <recommendedName>
        <fullName evidence="1">dCTP deaminase</fullName>
        <ecNumber evidence="1">3.5.4.13</ecNumber>
    </recommendedName>
    <alternativeName>
        <fullName evidence="1">Deoxycytidine triphosphate deaminase</fullName>
    </alternativeName>
</protein>
<gene>
    <name evidence="1" type="primary">dcd</name>
    <name type="ordered locus">YPTS_1647</name>
</gene>
<keyword id="KW-0378">Hydrolase</keyword>
<keyword id="KW-0546">Nucleotide metabolism</keyword>
<keyword id="KW-0547">Nucleotide-binding</keyword>
<comment type="function">
    <text evidence="1">Catalyzes the deamination of dCTP to dUTP.</text>
</comment>
<comment type="catalytic activity">
    <reaction evidence="1">
        <text>dCTP + H2O + H(+) = dUTP + NH4(+)</text>
        <dbReference type="Rhea" id="RHEA:22680"/>
        <dbReference type="ChEBI" id="CHEBI:15377"/>
        <dbReference type="ChEBI" id="CHEBI:15378"/>
        <dbReference type="ChEBI" id="CHEBI:28938"/>
        <dbReference type="ChEBI" id="CHEBI:61481"/>
        <dbReference type="ChEBI" id="CHEBI:61555"/>
        <dbReference type="EC" id="3.5.4.13"/>
    </reaction>
</comment>
<comment type="pathway">
    <text evidence="1">Pyrimidine metabolism; dUMP biosynthesis; dUMP from dCTP (dUTP route): step 1/2.</text>
</comment>
<comment type="subunit">
    <text evidence="1">Homotrimer.</text>
</comment>
<comment type="similarity">
    <text evidence="1">Belongs to the dCTP deaminase family.</text>
</comment>
<reference key="1">
    <citation type="submission" date="2008-04" db="EMBL/GenBank/DDBJ databases">
        <title>Complete sequence of Yersinia pseudotuberculosis PB1/+.</title>
        <authorList>
            <person name="Copeland A."/>
            <person name="Lucas S."/>
            <person name="Lapidus A."/>
            <person name="Glavina del Rio T."/>
            <person name="Dalin E."/>
            <person name="Tice H."/>
            <person name="Bruce D."/>
            <person name="Goodwin L."/>
            <person name="Pitluck S."/>
            <person name="Munk A.C."/>
            <person name="Brettin T."/>
            <person name="Detter J.C."/>
            <person name="Han C."/>
            <person name="Tapia R."/>
            <person name="Schmutz J."/>
            <person name="Larimer F."/>
            <person name="Land M."/>
            <person name="Hauser L."/>
            <person name="Challacombe J.F."/>
            <person name="Green L."/>
            <person name="Lindler L.E."/>
            <person name="Nikolich M.P."/>
            <person name="Richardson P."/>
        </authorList>
    </citation>
    <scope>NUCLEOTIDE SEQUENCE [LARGE SCALE GENOMIC DNA]</scope>
    <source>
        <strain>PB1/+</strain>
    </source>
</reference>
<evidence type="ECO:0000255" key="1">
    <source>
        <dbReference type="HAMAP-Rule" id="MF_00146"/>
    </source>
</evidence>
<evidence type="ECO:0000256" key="2">
    <source>
        <dbReference type="SAM" id="MobiDB-lite"/>
    </source>
</evidence>
<dbReference type="EC" id="3.5.4.13" evidence="1"/>
<dbReference type="EMBL" id="CP001048">
    <property type="protein sequence ID" value="ACC88616.1"/>
    <property type="molecule type" value="Genomic_DNA"/>
</dbReference>
<dbReference type="RefSeq" id="WP_002211873.1">
    <property type="nucleotide sequence ID" value="NZ_CP009780.1"/>
</dbReference>
<dbReference type="SMR" id="B2JZK6"/>
<dbReference type="GeneID" id="96665144"/>
<dbReference type="KEGG" id="ypb:YPTS_1647"/>
<dbReference type="PATRIC" id="fig|502801.10.peg.1018"/>
<dbReference type="UniPathway" id="UPA00610">
    <property type="reaction ID" value="UER00665"/>
</dbReference>
<dbReference type="GO" id="GO:0008829">
    <property type="term" value="F:dCTP deaminase activity"/>
    <property type="evidence" value="ECO:0007669"/>
    <property type="project" value="UniProtKB-UniRule"/>
</dbReference>
<dbReference type="GO" id="GO:0000166">
    <property type="term" value="F:nucleotide binding"/>
    <property type="evidence" value="ECO:0007669"/>
    <property type="project" value="UniProtKB-KW"/>
</dbReference>
<dbReference type="GO" id="GO:0006226">
    <property type="term" value="P:dUMP biosynthetic process"/>
    <property type="evidence" value="ECO:0007669"/>
    <property type="project" value="UniProtKB-UniPathway"/>
</dbReference>
<dbReference type="GO" id="GO:0006229">
    <property type="term" value="P:dUTP biosynthetic process"/>
    <property type="evidence" value="ECO:0007669"/>
    <property type="project" value="UniProtKB-UniRule"/>
</dbReference>
<dbReference type="GO" id="GO:0015949">
    <property type="term" value="P:nucleobase-containing small molecule interconversion"/>
    <property type="evidence" value="ECO:0007669"/>
    <property type="project" value="TreeGrafter"/>
</dbReference>
<dbReference type="CDD" id="cd07557">
    <property type="entry name" value="trimeric_dUTPase"/>
    <property type="match status" value="1"/>
</dbReference>
<dbReference type="FunFam" id="2.70.40.10:FF:000003">
    <property type="entry name" value="dCTP deaminase"/>
    <property type="match status" value="1"/>
</dbReference>
<dbReference type="Gene3D" id="2.70.40.10">
    <property type="match status" value="1"/>
</dbReference>
<dbReference type="HAMAP" id="MF_00146">
    <property type="entry name" value="dCTP_deaminase"/>
    <property type="match status" value="1"/>
</dbReference>
<dbReference type="InterPro" id="IPR011962">
    <property type="entry name" value="dCTP_deaminase"/>
</dbReference>
<dbReference type="InterPro" id="IPR036157">
    <property type="entry name" value="dUTPase-like_sf"/>
</dbReference>
<dbReference type="InterPro" id="IPR033704">
    <property type="entry name" value="dUTPase_trimeric"/>
</dbReference>
<dbReference type="NCBIfam" id="TIGR02274">
    <property type="entry name" value="dCTP_deam"/>
    <property type="match status" value="1"/>
</dbReference>
<dbReference type="PANTHER" id="PTHR42680">
    <property type="entry name" value="DCTP DEAMINASE"/>
    <property type="match status" value="1"/>
</dbReference>
<dbReference type="PANTHER" id="PTHR42680:SF3">
    <property type="entry name" value="DCTP DEAMINASE"/>
    <property type="match status" value="1"/>
</dbReference>
<dbReference type="Pfam" id="PF22769">
    <property type="entry name" value="DCD"/>
    <property type="match status" value="1"/>
</dbReference>
<dbReference type="SUPFAM" id="SSF51283">
    <property type="entry name" value="dUTPase-like"/>
    <property type="match status" value="1"/>
</dbReference>